<proteinExistence type="inferred from homology"/>
<protein>
    <recommendedName>
        <fullName evidence="1">Mycothiol acetyltransferase</fullName>
        <shortName evidence="1">MSH acetyltransferase</shortName>
        <ecNumber evidence="1">2.3.1.189</ecNumber>
    </recommendedName>
    <alternativeName>
        <fullName evidence="1">Mycothiol synthase</fullName>
    </alternativeName>
</protein>
<gene>
    <name evidence="1" type="primary">mshD</name>
    <name type="ordered locus">MLBr02193</name>
</gene>
<sequence>MVLNWRFALSADEQRLVREIISAATEFDEVSPVGEQVLRELGYDRTEHLLVTDSRPYAPIIGYLNLSSPRDAGVAMAELVVHPRERRRGVGAAMVRAALAKTGGRNRFWAHGTLASARATASVLGLVPVRELVQMQRSLRTIPDPMVPDQLGVWVRTYVGTVDDAELLRVNNAAFAGHPEQGGWTATQLAERRSEPWFDPAGLFLAFGDSSSNQPGKLLGFHWTKVHAAHPGLGEVYVLGVDPSAQGRGLGQMLTSIGIASLAQRLVGPSAEPTVMLYVESDNVAAARTYERLGFTTYSVDTAYALARIDD</sequence>
<accession>B8ZSU0</accession>
<organism>
    <name type="scientific">Mycobacterium leprae (strain Br4923)</name>
    <dbReference type="NCBI Taxonomy" id="561304"/>
    <lineage>
        <taxon>Bacteria</taxon>
        <taxon>Bacillati</taxon>
        <taxon>Actinomycetota</taxon>
        <taxon>Actinomycetes</taxon>
        <taxon>Mycobacteriales</taxon>
        <taxon>Mycobacteriaceae</taxon>
        <taxon>Mycobacterium</taxon>
    </lineage>
</organism>
<evidence type="ECO:0000255" key="1">
    <source>
        <dbReference type="HAMAP-Rule" id="MF_01698"/>
    </source>
</evidence>
<reference key="1">
    <citation type="journal article" date="2009" name="Nat. Genet.">
        <title>Comparative genomic and phylogeographic analysis of Mycobacterium leprae.</title>
        <authorList>
            <person name="Monot M."/>
            <person name="Honore N."/>
            <person name="Garnier T."/>
            <person name="Zidane N."/>
            <person name="Sherafi D."/>
            <person name="Paniz-Mondolfi A."/>
            <person name="Matsuoka M."/>
            <person name="Taylor G.M."/>
            <person name="Donoghue H.D."/>
            <person name="Bouwman A."/>
            <person name="Mays S."/>
            <person name="Watson C."/>
            <person name="Lockwood D."/>
            <person name="Khamispour A."/>
            <person name="Dowlati Y."/>
            <person name="Jianping S."/>
            <person name="Rea T.H."/>
            <person name="Vera-Cabrera L."/>
            <person name="Stefani M.M."/>
            <person name="Banu S."/>
            <person name="Macdonald M."/>
            <person name="Sapkota B.R."/>
            <person name="Spencer J.S."/>
            <person name="Thomas J."/>
            <person name="Harshman K."/>
            <person name="Singh P."/>
            <person name="Busso P."/>
            <person name="Gattiker A."/>
            <person name="Rougemont J."/>
            <person name="Brennan P.J."/>
            <person name="Cole S.T."/>
        </authorList>
    </citation>
    <scope>NUCLEOTIDE SEQUENCE [LARGE SCALE GENOMIC DNA]</scope>
    <source>
        <strain>Br4923</strain>
    </source>
</reference>
<name>MSHD_MYCLB</name>
<dbReference type="EC" id="2.3.1.189" evidence="1"/>
<dbReference type="EMBL" id="FM211192">
    <property type="protein sequence ID" value="CAR72290.1"/>
    <property type="molecule type" value="Genomic_DNA"/>
</dbReference>
<dbReference type="SMR" id="B8ZSU0"/>
<dbReference type="KEGG" id="mlb:MLBr02193"/>
<dbReference type="HOGENOM" id="CLU_068014_0_0_11"/>
<dbReference type="Proteomes" id="UP000006900">
    <property type="component" value="Chromosome"/>
</dbReference>
<dbReference type="GO" id="GO:0035447">
    <property type="term" value="F:mycothiol synthase activity"/>
    <property type="evidence" value="ECO:0007669"/>
    <property type="project" value="UniProtKB-UniRule"/>
</dbReference>
<dbReference type="GO" id="GO:0008999">
    <property type="term" value="F:protein-N-terminal-alanine acetyltransferase activity"/>
    <property type="evidence" value="ECO:0007669"/>
    <property type="project" value="TreeGrafter"/>
</dbReference>
<dbReference type="GO" id="GO:0010125">
    <property type="term" value="P:mycothiol biosynthetic process"/>
    <property type="evidence" value="ECO:0007669"/>
    <property type="project" value="UniProtKB-UniRule"/>
</dbReference>
<dbReference type="CDD" id="cd04301">
    <property type="entry name" value="NAT_SF"/>
    <property type="match status" value="2"/>
</dbReference>
<dbReference type="Gene3D" id="3.40.630.30">
    <property type="match status" value="1"/>
</dbReference>
<dbReference type="HAMAP" id="MF_01698">
    <property type="entry name" value="MshD"/>
    <property type="match status" value="1"/>
</dbReference>
<dbReference type="InterPro" id="IPR016181">
    <property type="entry name" value="Acyl_CoA_acyltransferase"/>
</dbReference>
<dbReference type="InterPro" id="IPR000182">
    <property type="entry name" value="GNAT_dom"/>
</dbReference>
<dbReference type="InterPro" id="IPR050276">
    <property type="entry name" value="MshD_Acetyltransferase"/>
</dbReference>
<dbReference type="InterPro" id="IPR017813">
    <property type="entry name" value="Mycothiol_AcTrfase"/>
</dbReference>
<dbReference type="NCBIfam" id="TIGR03448">
    <property type="entry name" value="mycothiol_MshD"/>
    <property type="match status" value="1"/>
</dbReference>
<dbReference type="PANTHER" id="PTHR43617">
    <property type="entry name" value="L-AMINO ACID N-ACETYLTRANSFERASE"/>
    <property type="match status" value="1"/>
</dbReference>
<dbReference type="PANTHER" id="PTHR43617:SF31">
    <property type="entry name" value="MYCOTHIOL ACETYLTRANSFERASE"/>
    <property type="match status" value="1"/>
</dbReference>
<dbReference type="Pfam" id="PF00583">
    <property type="entry name" value="Acetyltransf_1"/>
    <property type="match status" value="2"/>
</dbReference>
<dbReference type="PIRSF" id="PIRSF021524">
    <property type="entry name" value="MSH_acetyltransferase"/>
    <property type="match status" value="1"/>
</dbReference>
<dbReference type="SUPFAM" id="SSF55729">
    <property type="entry name" value="Acyl-CoA N-acyltransferases (Nat)"/>
    <property type="match status" value="1"/>
</dbReference>
<dbReference type="PROSITE" id="PS51186">
    <property type="entry name" value="GNAT"/>
    <property type="match status" value="1"/>
</dbReference>
<comment type="function">
    <text evidence="1">Catalyzes the transfer of acetyl from acetyl-CoA to desacetylmycothiol (Cys-GlcN-Ins) to form mycothiol.</text>
</comment>
<comment type="catalytic activity">
    <reaction evidence="1">
        <text>1D-myo-inositol 2-(L-cysteinylamino)-2-deoxy-alpha-D-glucopyranoside + acetyl-CoA = mycothiol + CoA + H(+)</text>
        <dbReference type="Rhea" id="RHEA:26172"/>
        <dbReference type="ChEBI" id="CHEBI:15378"/>
        <dbReference type="ChEBI" id="CHEBI:16768"/>
        <dbReference type="ChEBI" id="CHEBI:57287"/>
        <dbReference type="ChEBI" id="CHEBI:57288"/>
        <dbReference type="ChEBI" id="CHEBI:58887"/>
        <dbReference type="EC" id="2.3.1.189"/>
    </reaction>
</comment>
<comment type="subunit">
    <text evidence="1">Monomer.</text>
</comment>
<comment type="similarity">
    <text evidence="1">Belongs to the acetyltransferase family. MshD subfamily.</text>
</comment>
<feature type="chain" id="PRO_0000400273" description="Mycothiol acetyltransferase">
    <location>
        <begin position="1"/>
        <end position="311"/>
    </location>
</feature>
<feature type="domain" description="N-acetyltransferase" evidence="1">
    <location>
        <begin position="155"/>
        <end position="311"/>
    </location>
</feature>
<feature type="binding site" evidence="1">
    <location>
        <position position="35"/>
    </location>
    <ligand>
        <name>1D-myo-inositol 2-(L-cysteinylamino)-2-deoxy-alpha-D-glucopyranoside</name>
        <dbReference type="ChEBI" id="CHEBI:58887"/>
    </ligand>
</feature>
<feature type="binding site" evidence="1">
    <location>
        <begin position="79"/>
        <end position="81"/>
    </location>
    <ligand>
        <name>acetyl-CoA</name>
        <dbReference type="ChEBI" id="CHEBI:57288"/>
        <label>1</label>
    </ligand>
</feature>
<feature type="binding site" evidence="1">
    <location>
        <position position="180"/>
    </location>
    <ligand>
        <name>1D-myo-inositol 2-(L-cysteinylamino)-2-deoxy-alpha-D-glucopyranoside</name>
        <dbReference type="ChEBI" id="CHEBI:58887"/>
    </ligand>
</feature>
<feature type="binding site" evidence="1">
    <location>
        <position position="225"/>
    </location>
    <ligand>
        <name>1D-myo-inositol 2-(L-cysteinylamino)-2-deoxy-alpha-D-glucopyranoside</name>
        <dbReference type="ChEBI" id="CHEBI:58887"/>
    </ligand>
</feature>
<feature type="binding site" evidence="1">
    <location>
        <position position="235"/>
    </location>
    <ligand>
        <name>1D-myo-inositol 2-(L-cysteinylamino)-2-deoxy-alpha-D-glucopyranoside</name>
        <dbReference type="ChEBI" id="CHEBI:58887"/>
    </ligand>
</feature>
<feature type="binding site" evidence="1">
    <location>
        <begin position="239"/>
        <end position="241"/>
    </location>
    <ligand>
        <name>acetyl-CoA</name>
        <dbReference type="ChEBI" id="CHEBI:57288"/>
        <label>2</label>
    </ligand>
</feature>
<feature type="binding site" evidence="1">
    <location>
        <begin position="246"/>
        <end position="252"/>
    </location>
    <ligand>
        <name>acetyl-CoA</name>
        <dbReference type="ChEBI" id="CHEBI:57288"/>
        <label>2</label>
    </ligand>
</feature>
<feature type="binding site" evidence="1">
    <location>
        <position position="278"/>
    </location>
    <ligand>
        <name>1D-myo-inositol 2-(L-cysteinylamino)-2-deoxy-alpha-D-glucopyranoside</name>
        <dbReference type="ChEBI" id="CHEBI:58887"/>
    </ligand>
</feature>
<feature type="binding site" evidence="1">
    <location>
        <begin position="283"/>
        <end position="288"/>
    </location>
    <ligand>
        <name>acetyl-CoA</name>
        <dbReference type="ChEBI" id="CHEBI:57288"/>
        <label>2</label>
    </ligand>
</feature>
<keyword id="KW-0012">Acyltransferase</keyword>
<keyword id="KW-0677">Repeat</keyword>
<keyword id="KW-0808">Transferase</keyword>